<comment type="subcellular location">
    <subcellularLocation>
        <location evidence="1">Cytoplasm</location>
    </subcellularLocation>
</comment>
<comment type="similarity">
    <text evidence="1">Belongs to the TACO1 family. YeeN subfamily.</text>
</comment>
<evidence type="ECO:0000255" key="1">
    <source>
        <dbReference type="HAMAP-Rule" id="MF_00918"/>
    </source>
</evidence>
<gene>
    <name type="ordered locus">spr1738</name>
</gene>
<sequence>MGRKWANIVAKKTAKDGANSKVYAKFGVEIYVAAKKGDPDPESNSALKFVIDRAKQAQVPKHIIDKAIDKAKGNTDETFTEGRYEGFGPNGSMLIVDTLTSNVNRTAANVRAAFGKNGGNMGASGSVSYLFDNKGVIVFGGEDADAVFEQLLEADVDVDDVEAQEGTITVYTAPTDLHKAIVALRESGIEEFQVTELEMIPQSEVELSGEDLETFEKLYSVLEDDEDVQKIYTNVDGF</sequence>
<proteinExistence type="inferred from homology"/>
<reference key="1">
    <citation type="journal article" date="2001" name="J. Bacteriol.">
        <title>Genome of the bacterium Streptococcus pneumoniae strain R6.</title>
        <authorList>
            <person name="Hoskins J."/>
            <person name="Alborn W.E. Jr."/>
            <person name="Arnold J."/>
            <person name="Blaszczak L.C."/>
            <person name="Burgett S."/>
            <person name="DeHoff B.S."/>
            <person name="Estrem S.T."/>
            <person name="Fritz L."/>
            <person name="Fu D.-J."/>
            <person name="Fuller W."/>
            <person name="Geringer C."/>
            <person name="Gilmour R."/>
            <person name="Glass J.S."/>
            <person name="Khoja H."/>
            <person name="Kraft A.R."/>
            <person name="Lagace R.E."/>
            <person name="LeBlanc D.J."/>
            <person name="Lee L.N."/>
            <person name="Lefkowitz E.J."/>
            <person name="Lu J."/>
            <person name="Matsushima P."/>
            <person name="McAhren S.M."/>
            <person name="McHenney M."/>
            <person name="McLeaster K."/>
            <person name="Mundy C.W."/>
            <person name="Nicas T.I."/>
            <person name="Norris F.H."/>
            <person name="O'Gara M."/>
            <person name="Peery R.B."/>
            <person name="Robertson G.T."/>
            <person name="Rockey P."/>
            <person name="Sun P.-M."/>
            <person name="Winkler M.E."/>
            <person name="Yang Y."/>
            <person name="Young-Bellido M."/>
            <person name="Zhao G."/>
            <person name="Zook C.A."/>
            <person name="Baltz R.H."/>
            <person name="Jaskunas S.R."/>
            <person name="Rosteck P.R. Jr."/>
            <person name="Skatrud P.L."/>
            <person name="Glass J.I."/>
        </authorList>
    </citation>
    <scope>NUCLEOTIDE SEQUENCE [LARGE SCALE GENOMIC DNA]</scope>
    <source>
        <strain>ATCC BAA-255 / R6</strain>
    </source>
</reference>
<keyword id="KW-0963">Cytoplasm</keyword>
<keyword id="KW-0238">DNA-binding</keyword>
<keyword id="KW-1185">Reference proteome</keyword>
<keyword id="KW-0804">Transcription</keyword>
<keyword id="KW-0805">Transcription regulation</keyword>
<accession>P67187</accession>
<accession>Q8DNG4</accession>
<accession>Q97NU0</accession>
<dbReference type="EMBL" id="AE007317">
    <property type="protein sequence ID" value="AAL00541.1"/>
    <property type="molecule type" value="Genomic_DNA"/>
</dbReference>
<dbReference type="PIR" id="H98088">
    <property type="entry name" value="H98088"/>
</dbReference>
<dbReference type="RefSeq" id="NP_359330.1">
    <property type="nucleotide sequence ID" value="NC_003098.1"/>
</dbReference>
<dbReference type="RefSeq" id="WP_000532876.1">
    <property type="nucleotide sequence ID" value="NC_003098.1"/>
</dbReference>
<dbReference type="SMR" id="P67187"/>
<dbReference type="STRING" id="171101.spr1738"/>
<dbReference type="KEGG" id="spr:spr1738"/>
<dbReference type="PATRIC" id="fig|171101.6.peg.1881"/>
<dbReference type="eggNOG" id="COG0217">
    <property type="taxonomic scope" value="Bacteria"/>
</dbReference>
<dbReference type="HOGENOM" id="CLU_062974_2_0_9"/>
<dbReference type="Proteomes" id="UP000000586">
    <property type="component" value="Chromosome"/>
</dbReference>
<dbReference type="GO" id="GO:0005829">
    <property type="term" value="C:cytosol"/>
    <property type="evidence" value="ECO:0000318"/>
    <property type="project" value="GO_Central"/>
</dbReference>
<dbReference type="GO" id="GO:0003677">
    <property type="term" value="F:DNA binding"/>
    <property type="evidence" value="ECO:0007669"/>
    <property type="project" value="UniProtKB-UniRule"/>
</dbReference>
<dbReference type="GO" id="GO:0006355">
    <property type="term" value="P:regulation of DNA-templated transcription"/>
    <property type="evidence" value="ECO:0007669"/>
    <property type="project" value="UniProtKB-UniRule"/>
</dbReference>
<dbReference type="FunFam" id="1.10.10.200:FF:000003">
    <property type="entry name" value="Probable transcriptional regulatory protein YeeN"/>
    <property type="match status" value="1"/>
</dbReference>
<dbReference type="FunFam" id="3.30.70.980:FF:000004">
    <property type="entry name" value="Probable transcriptional regulatory protein YeeN"/>
    <property type="match status" value="1"/>
</dbReference>
<dbReference type="Gene3D" id="1.10.10.200">
    <property type="match status" value="1"/>
</dbReference>
<dbReference type="Gene3D" id="3.30.70.980">
    <property type="match status" value="2"/>
</dbReference>
<dbReference type="HAMAP" id="MF_00693">
    <property type="entry name" value="Transcrip_reg_TACO1"/>
    <property type="match status" value="1"/>
</dbReference>
<dbReference type="HAMAP" id="MF_00918">
    <property type="entry name" value="Transcrip_reg_TACO1_YeeN"/>
    <property type="match status" value="1"/>
</dbReference>
<dbReference type="InterPro" id="IPR017856">
    <property type="entry name" value="Integrase-like_N"/>
</dbReference>
<dbReference type="InterPro" id="IPR048300">
    <property type="entry name" value="TACO1_YebC-like_2nd/3rd_dom"/>
</dbReference>
<dbReference type="InterPro" id="IPR049083">
    <property type="entry name" value="TACO1_YebC_N"/>
</dbReference>
<dbReference type="InterPro" id="IPR002876">
    <property type="entry name" value="Transcrip_reg_TACO1-like"/>
</dbReference>
<dbReference type="InterPro" id="IPR026564">
    <property type="entry name" value="Transcrip_reg_TACO1-like_dom3"/>
</dbReference>
<dbReference type="InterPro" id="IPR026562">
    <property type="entry name" value="Transcrip_reg_TACO1_YeeN"/>
</dbReference>
<dbReference type="InterPro" id="IPR029072">
    <property type="entry name" value="YebC-like"/>
</dbReference>
<dbReference type="NCBIfam" id="NF001030">
    <property type="entry name" value="PRK00110.1"/>
    <property type="match status" value="1"/>
</dbReference>
<dbReference type="NCBIfam" id="NF009044">
    <property type="entry name" value="PRK12378.1"/>
    <property type="match status" value="1"/>
</dbReference>
<dbReference type="NCBIfam" id="TIGR01033">
    <property type="entry name" value="YebC/PmpR family DNA-binding transcriptional regulator"/>
    <property type="match status" value="1"/>
</dbReference>
<dbReference type="PANTHER" id="PTHR12532">
    <property type="entry name" value="TRANSLATIONAL ACTIVATOR OF CYTOCHROME C OXIDASE 1"/>
    <property type="match status" value="1"/>
</dbReference>
<dbReference type="PANTHER" id="PTHR12532:SF0">
    <property type="entry name" value="TRANSLATIONAL ACTIVATOR OF CYTOCHROME C OXIDASE 1"/>
    <property type="match status" value="1"/>
</dbReference>
<dbReference type="Pfam" id="PF20772">
    <property type="entry name" value="TACO1_YebC_N"/>
    <property type="match status" value="1"/>
</dbReference>
<dbReference type="Pfam" id="PF01709">
    <property type="entry name" value="Transcrip_reg"/>
    <property type="match status" value="1"/>
</dbReference>
<dbReference type="SUPFAM" id="SSF75625">
    <property type="entry name" value="YebC-like"/>
    <property type="match status" value="1"/>
</dbReference>
<name>Y1738_STRR6</name>
<organism>
    <name type="scientific">Streptococcus pneumoniae (strain ATCC BAA-255 / R6)</name>
    <dbReference type="NCBI Taxonomy" id="171101"/>
    <lineage>
        <taxon>Bacteria</taxon>
        <taxon>Bacillati</taxon>
        <taxon>Bacillota</taxon>
        <taxon>Bacilli</taxon>
        <taxon>Lactobacillales</taxon>
        <taxon>Streptococcaceae</taxon>
        <taxon>Streptococcus</taxon>
    </lineage>
</organism>
<feature type="chain" id="PRO_0000175905" description="Probable transcriptional regulatory protein spr1738">
    <location>
        <begin position="1"/>
        <end position="238"/>
    </location>
</feature>
<protein>
    <recommendedName>
        <fullName evidence="1">Probable transcriptional regulatory protein spr1738</fullName>
    </recommendedName>
</protein>